<reference key="1">
    <citation type="submission" date="2006-12" db="EMBL/GenBank/DDBJ databases">
        <title>Complete sequence of chromosome 1 of Paracoccus denitrificans PD1222.</title>
        <authorList>
            <person name="Copeland A."/>
            <person name="Lucas S."/>
            <person name="Lapidus A."/>
            <person name="Barry K."/>
            <person name="Detter J.C."/>
            <person name="Glavina del Rio T."/>
            <person name="Hammon N."/>
            <person name="Israni S."/>
            <person name="Dalin E."/>
            <person name="Tice H."/>
            <person name="Pitluck S."/>
            <person name="Munk A.C."/>
            <person name="Brettin T."/>
            <person name="Bruce D."/>
            <person name="Han C."/>
            <person name="Tapia R."/>
            <person name="Gilna P."/>
            <person name="Schmutz J."/>
            <person name="Larimer F."/>
            <person name="Land M."/>
            <person name="Hauser L."/>
            <person name="Kyrpides N."/>
            <person name="Lykidis A."/>
            <person name="Spiro S."/>
            <person name="Richardson D.J."/>
            <person name="Moir J.W.B."/>
            <person name="Ferguson S.J."/>
            <person name="van Spanning R.J.M."/>
            <person name="Richardson P."/>
        </authorList>
    </citation>
    <scope>NUCLEOTIDE SEQUENCE [LARGE SCALE GENOMIC DNA]</scope>
    <source>
        <strain>Pd 1222</strain>
    </source>
</reference>
<proteinExistence type="inferred from homology"/>
<protein>
    <recommendedName>
        <fullName evidence="1">Putative pre-16S rRNA nuclease</fullName>
        <ecNumber evidence="1">3.1.-.-</ecNumber>
    </recommendedName>
</protein>
<sequence length="158" mass="17101">MICENVETFAEALPRTGAVAGLDLGTKTIGVAVSDGLRGVASPLTVIRRTKFTADAQALLKIVQDRALVGLVLGLPRNMDGSEGPRAQSTRAFARNLERLTPLPITFWDERLSTVAAERALLEGDTSRKRRAEVIDQVAAGYILQGALDRLRFLGRTE</sequence>
<gene>
    <name type="ordered locus">Pden_0510</name>
</gene>
<organism>
    <name type="scientific">Paracoccus denitrificans (strain Pd 1222)</name>
    <dbReference type="NCBI Taxonomy" id="318586"/>
    <lineage>
        <taxon>Bacteria</taxon>
        <taxon>Pseudomonadati</taxon>
        <taxon>Pseudomonadota</taxon>
        <taxon>Alphaproteobacteria</taxon>
        <taxon>Rhodobacterales</taxon>
        <taxon>Paracoccaceae</taxon>
        <taxon>Paracoccus</taxon>
    </lineage>
</organism>
<evidence type="ECO:0000255" key="1">
    <source>
        <dbReference type="HAMAP-Rule" id="MF_00651"/>
    </source>
</evidence>
<feature type="chain" id="PRO_1000061549" description="Putative pre-16S rRNA nuclease">
    <location>
        <begin position="1"/>
        <end position="158"/>
    </location>
</feature>
<keyword id="KW-0963">Cytoplasm</keyword>
<keyword id="KW-0378">Hydrolase</keyword>
<keyword id="KW-0540">Nuclease</keyword>
<keyword id="KW-1185">Reference proteome</keyword>
<keyword id="KW-0690">Ribosome biogenesis</keyword>
<accession>A1AZC8</accession>
<comment type="function">
    <text evidence="1">Could be a nuclease involved in processing of the 5'-end of pre-16S rRNA.</text>
</comment>
<comment type="subcellular location">
    <subcellularLocation>
        <location evidence="1">Cytoplasm</location>
    </subcellularLocation>
</comment>
<comment type="similarity">
    <text evidence="1">Belongs to the YqgF nuclease family.</text>
</comment>
<name>YQGF_PARDP</name>
<dbReference type="EC" id="3.1.-.-" evidence="1"/>
<dbReference type="EMBL" id="CP000489">
    <property type="protein sequence ID" value="ABL68622.1"/>
    <property type="molecule type" value="Genomic_DNA"/>
</dbReference>
<dbReference type="RefSeq" id="WP_011746855.1">
    <property type="nucleotide sequence ID" value="NC_008686.1"/>
</dbReference>
<dbReference type="SMR" id="A1AZC8"/>
<dbReference type="STRING" id="318586.Pden_0510"/>
<dbReference type="EnsemblBacteria" id="ABL68622">
    <property type="protein sequence ID" value="ABL68622"/>
    <property type="gene ID" value="Pden_0510"/>
</dbReference>
<dbReference type="GeneID" id="93451734"/>
<dbReference type="KEGG" id="pde:Pden_0510"/>
<dbReference type="eggNOG" id="COG0816">
    <property type="taxonomic scope" value="Bacteria"/>
</dbReference>
<dbReference type="HOGENOM" id="CLU_098240_1_1_5"/>
<dbReference type="OrthoDB" id="9796140at2"/>
<dbReference type="Proteomes" id="UP000000361">
    <property type="component" value="Chromosome 1"/>
</dbReference>
<dbReference type="GO" id="GO:0005829">
    <property type="term" value="C:cytosol"/>
    <property type="evidence" value="ECO:0007669"/>
    <property type="project" value="TreeGrafter"/>
</dbReference>
<dbReference type="GO" id="GO:0004518">
    <property type="term" value="F:nuclease activity"/>
    <property type="evidence" value="ECO:0007669"/>
    <property type="project" value="UniProtKB-KW"/>
</dbReference>
<dbReference type="GO" id="GO:0000967">
    <property type="term" value="P:rRNA 5'-end processing"/>
    <property type="evidence" value="ECO:0007669"/>
    <property type="project" value="UniProtKB-UniRule"/>
</dbReference>
<dbReference type="CDD" id="cd16964">
    <property type="entry name" value="YqgF"/>
    <property type="match status" value="1"/>
</dbReference>
<dbReference type="Gene3D" id="3.30.420.140">
    <property type="entry name" value="YqgF/RNase H-like domain"/>
    <property type="match status" value="1"/>
</dbReference>
<dbReference type="HAMAP" id="MF_00651">
    <property type="entry name" value="Nuclease_YqgF"/>
    <property type="match status" value="1"/>
</dbReference>
<dbReference type="InterPro" id="IPR012337">
    <property type="entry name" value="RNaseH-like_sf"/>
</dbReference>
<dbReference type="InterPro" id="IPR005227">
    <property type="entry name" value="YqgF"/>
</dbReference>
<dbReference type="InterPro" id="IPR006641">
    <property type="entry name" value="YqgF/RNaseH-like_dom"/>
</dbReference>
<dbReference type="InterPro" id="IPR037027">
    <property type="entry name" value="YqgF/RNaseH-like_dom_sf"/>
</dbReference>
<dbReference type="NCBIfam" id="TIGR00250">
    <property type="entry name" value="RNAse_H_YqgF"/>
    <property type="match status" value="1"/>
</dbReference>
<dbReference type="PANTHER" id="PTHR33317">
    <property type="entry name" value="POLYNUCLEOTIDYL TRANSFERASE, RIBONUCLEASE H-LIKE SUPERFAMILY PROTEIN"/>
    <property type="match status" value="1"/>
</dbReference>
<dbReference type="PANTHER" id="PTHR33317:SF4">
    <property type="entry name" value="POLYNUCLEOTIDYL TRANSFERASE, RIBONUCLEASE H-LIKE SUPERFAMILY PROTEIN"/>
    <property type="match status" value="1"/>
</dbReference>
<dbReference type="Pfam" id="PF03652">
    <property type="entry name" value="RuvX"/>
    <property type="match status" value="1"/>
</dbReference>
<dbReference type="SMART" id="SM00732">
    <property type="entry name" value="YqgFc"/>
    <property type="match status" value="1"/>
</dbReference>
<dbReference type="SUPFAM" id="SSF53098">
    <property type="entry name" value="Ribonuclease H-like"/>
    <property type="match status" value="1"/>
</dbReference>